<organism>
    <name type="scientific">Polaromonas naphthalenivorans (strain CJ2)</name>
    <dbReference type="NCBI Taxonomy" id="365044"/>
    <lineage>
        <taxon>Bacteria</taxon>
        <taxon>Pseudomonadati</taxon>
        <taxon>Pseudomonadota</taxon>
        <taxon>Betaproteobacteria</taxon>
        <taxon>Burkholderiales</taxon>
        <taxon>Comamonadaceae</taxon>
        <taxon>Polaromonas</taxon>
    </lineage>
</organism>
<protein>
    <recommendedName>
        <fullName evidence="1">Small ribosomal subunit protein uS11</fullName>
    </recommendedName>
    <alternativeName>
        <fullName evidence="2">30S ribosomal protein S11</fullName>
    </alternativeName>
</protein>
<feature type="chain" id="PRO_0000294818" description="Small ribosomal subunit protein uS11">
    <location>
        <begin position="1"/>
        <end position="134"/>
    </location>
</feature>
<keyword id="KW-1185">Reference proteome</keyword>
<keyword id="KW-0687">Ribonucleoprotein</keyword>
<keyword id="KW-0689">Ribosomal protein</keyword>
<keyword id="KW-0694">RNA-binding</keyword>
<keyword id="KW-0699">rRNA-binding</keyword>
<comment type="function">
    <text evidence="1">Located on the platform of the 30S subunit, it bridges several disparate RNA helices of the 16S rRNA. Forms part of the Shine-Dalgarno cleft in the 70S ribosome.</text>
</comment>
<comment type="subunit">
    <text evidence="1">Part of the 30S ribosomal subunit. Interacts with proteins S7 and S18. Binds to IF-3.</text>
</comment>
<comment type="similarity">
    <text evidence="1">Belongs to the universal ribosomal protein uS11 family.</text>
</comment>
<gene>
    <name evidence="1" type="primary">rpsK</name>
    <name type="ordered locus">Pnap_0343</name>
</gene>
<accession>A1VJ38</accession>
<evidence type="ECO:0000255" key="1">
    <source>
        <dbReference type="HAMAP-Rule" id="MF_01310"/>
    </source>
</evidence>
<evidence type="ECO:0000305" key="2"/>
<proteinExistence type="inferred from homology"/>
<dbReference type="EMBL" id="CP000529">
    <property type="protein sequence ID" value="ABM35666.1"/>
    <property type="molecule type" value="Genomic_DNA"/>
</dbReference>
<dbReference type="RefSeq" id="WP_011799771.1">
    <property type="nucleotide sequence ID" value="NC_008781.1"/>
</dbReference>
<dbReference type="SMR" id="A1VJ38"/>
<dbReference type="STRING" id="365044.Pnap_0343"/>
<dbReference type="KEGG" id="pna:Pnap_0343"/>
<dbReference type="eggNOG" id="COG0100">
    <property type="taxonomic scope" value="Bacteria"/>
</dbReference>
<dbReference type="HOGENOM" id="CLU_072439_5_0_4"/>
<dbReference type="OrthoDB" id="9806415at2"/>
<dbReference type="Proteomes" id="UP000000644">
    <property type="component" value="Chromosome"/>
</dbReference>
<dbReference type="GO" id="GO:1990904">
    <property type="term" value="C:ribonucleoprotein complex"/>
    <property type="evidence" value="ECO:0007669"/>
    <property type="project" value="UniProtKB-KW"/>
</dbReference>
<dbReference type="GO" id="GO:0005840">
    <property type="term" value="C:ribosome"/>
    <property type="evidence" value="ECO:0007669"/>
    <property type="project" value="UniProtKB-KW"/>
</dbReference>
<dbReference type="GO" id="GO:0019843">
    <property type="term" value="F:rRNA binding"/>
    <property type="evidence" value="ECO:0007669"/>
    <property type="project" value="UniProtKB-UniRule"/>
</dbReference>
<dbReference type="GO" id="GO:0003735">
    <property type="term" value="F:structural constituent of ribosome"/>
    <property type="evidence" value="ECO:0007669"/>
    <property type="project" value="InterPro"/>
</dbReference>
<dbReference type="GO" id="GO:0006412">
    <property type="term" value="P:translation"/>
    <property type="evidence" value="ECO:0007669"/>
    <property type="project" value="UniProtKB-UniRule"/>
</dbReference>
<dbReference type="FunFam" id="3.30.420.80:FF:000001">
    <property type="entry name" value="30S ribosomal protein S11"/>
    <property type="match status" value="1"/>
</dbReference>
<dbReference type="Gene3D" id="3.30.420.80">
    <property type="entry name" value="Ribosomal protein S11"/>
    <property type="match status" value="1"/>
</dbReference>
<dbReference type="HAMAP" id="MF_01310">
    <property type="entry name" value="Ribosomal_uS11"/>
    <property type="match status" value="1"/>
</dbReference>
<dbReference type="InterPro" id="IPR001971">
    <property type="entry name" value="Ribosomal_uS11"/>
</dbReference>
<dbReference type="InterPro" id="IPR019981">
    <property type="entry name" value="Ribosomal_uS11_bac-type"/>
</dbReference>
<dbReference type="InterPro" id="IPR018102">
    <property type="entry name" value="Ribosomal_uS11_CS"/>
</dbReference>
<dbReference type="InterPro" id="IPR036967">
    <property type="entry name" value="Ribosomal_uS11_sf"/>
</dbReference>
<dbReference type="NCBIfam" id="NF003698">
    <property type="entry name" value="PRK05309.1"/>
    <property type="match status" value="1"/>
</dbReference>
<dbReference type="NCBIfam" id="TIGR03632">
    <property type="entry name" value="uS11_bact"/>
    <property type="match status" value="1"/>
</dbReference>
<dbReference type="PANTHER" id="PTHR11759">
    <property type="entry name" value="40S RIBOSOMAL PROTEIN S14/30S RIBOSOMAL PROTEIN S11"/>
    <property type="match status" value="1"/>
</dbReference>
<dbReference type="Pfam" id="PF00411">
    <property type="entry name" value="Ribosomal_S11"/>
    <property type="match status" value="1"/>
</dbReference>
<dbReference type="PIRSF" id="PIRSF002131">
    <property type="entry name" value="Ribosomal_S11"/>
    <property type="match status" value="1"/>
</dbReference>
<dbReference type="SUPFAM" id="SSF53137">
    <property type="entry name" value="Translational machinery components"/>
    <property type="match status" value="1"/>
</dbReference>
<dbReference type="PROSITE" id="PS00054">
    <property type="entry name" value="RIBOSOMAL_S11"/>
    <property type="match status" value="1"/>
</dbReference>
<sequence length="134" mass="14174">MAKSPNNSAAQRVRKKVRKNVADGIAHVHASFNNTIITITDRQGNALSWASSGGQGFKGSRKSTPFAAQVASEVAGRAAIEQGIKNLDVEIKGPGPGRESSVRALGALGIRINSIADVTPVPHNGCRPQKRRRI</sequence>
<name>RS11_POLNA</name>
<reference key="1">
    <citation type="journal article" date="2009" name="Environ. Microbiol.">
        <title>The genome of Polaromonas naphthalenivorans strain CJ2, isolated from coal tar-contaminated sediment, reveals physiological and metabolic versatility and evolution through extensive horizontal gene transfer.</title>
        <authorList>
            <person name="Yagi J.M."/>
            <person name="Sims D."/>
            <person name="Brettin T."/>
            <person name="Bruce D."/>
            <person name="Madsen E.L."/>
        </authorList>
    </citation>
    <scope>NUCLEOTIDE SEQUENCE [LARGE SCALE GENOMIC DNA]</scope>
    <source>
        <strain>CJ2</strain>
    </source>
</reference>